<comment type="function">
    <text evidence="1">Involved in the regulation of cell growth. May stabilize the active CDC2-cyclin B1 complex and thereby contribute to the regulation of the cell cycle and the prevention of uncontrolled cell proliferation. May act as tumor suppressor (By similarity).</text>
</comment>
<comment type="subunit">
    <text evidence="1">Binds EEF1G, TLK2 and CDK1.</text>
</comment>
<comment type="subcellular location">
    <subcellularLocation>
        <location evidence="1">Cytoplasm</location>
    </subcellularLocation>
    <subcellularLocation>
        <location evidence="1">Cell membrane</location>
    </subcellularLocation>
    <subcellularLocation>
        <location evidence="1">Cell projection</location>
        <location evidence="1">Dendritic spine</location>
    </subcellularLocation>
    <subcellularLocation>
        <location evidence="1">Postsynaptic density</location>
    </subcellularLocation>
    <subcellularLocation>
        <location evidence="1">Synapse</location>
    </subcellularLocation>
    <text evidence="1">Associated with the plasma membrane and with microtubules. Detected in dendritic spines, especially in the postsynaptic density (By similarity).</text>
</comment>
<comment type="PTM">
    <text evidence="1">Phosphorylated on serine residues. Hyperphosphorylated by the cAMP-dependent kinase PKA during cell-cycle progression (By similarity).</text>
</comment>
<comment type="similarity">
    <text evidence="4">Belongs to the LZTS family.</text>
</comment>
<accession>P60853</accession>
<accession>B2RTI1</accession>
<protein>
    <recommendedName>
        <fullName>Leucine zipper putative tumor suppressor 1</fullName>
    </recommendedName>
    <alternativeName>
        <fullName>F37/Esophageal cancer-related gene-coding leucine-zipper motif</fullName>
    </alternativeName>
    <alternativeName>
        <fullName>Fez1</fullName>
    </alternativeName>
</protein>
<keyword id="KW-0131">Cell cycle</keyword>
<keyword id="KW-1003">Cell membrane</keyword>
<keyword id="KW-0966">Cell projection</keyword>
<keyword id="KW-0175">Coiled coil</keyword>
<keyword id="KW-0963">Cytoplasm</keyword>
<keyword id="KW-0449">Lipoprotein</keyword>
<keyword id="KW-0472">Membrane</keyword>
<keyword id="KW-0519">Myristate</keyword>
<keyword id="KW-1185">Reference proteome</keyword>
<keyword id="KW-0770">Synapse</keyword>
<keyword id="KW-0043">Tumor suppressor</keyword>
<organism>
    <name type="scientific">Mus musculus</name>
    <name type="common">Mouse</name>
    <dbReference type="NCBI Taxonomy" id="10090"/>
    <lineage>
        <taxon>Eukaryota</taxon>
        <taxon>Metazoa</taxon>
        <taxon>Chordata</taxon>
        <taxon>Craniata</taxon>
        <taxon>Vertebrata</taxon>
        <taxon>Euteleostomi</taxon>
        <taxon>Mammalia</taxon>
        <taxon>Eutheria</taxon>
        <taxon>Euarchontoglires</taxon>
        <taxon>Glires</taxon>
        <taxon>Rodentia</taxon>
        <taxon>Myomorpha</taxon>
        <taxon>Muroidea</taxon>
        <taxon>Muridae</taxon>
        <taxon>Murinae</taxon>
        <taxon>Mus</taxon>
        <taxon>Mus</taxon>
    </lineage>
</organism>
<gene>
    <name type="primary">Lzts1</name>
    <name type="synonym">Fez1</name>
</gene>
<reference key="1">
    <citation type="journal article" date="1999" name="Proc. Natl. Acad. Sci. U.S.A.">
        <title>The FEZ1 gene at chromosome 8p22 encodes a leucine-zipper protein, and its expression is altered in multiple human tumors.</title>
        <authorList>
            <person name="Ishii H."/>
            <person name="Baffa R."/>
            <person name="Numata S."/>
            <person name="Murakumo Y."/>
            <person name="Rattan S."/>
            <person name="Inoue H."/>
            <person name="Mori M."/>
            <person name="Fidanza V."/>
            <person name="Alder H."/>
            <person name="Croce C.M."/>
        </authorList>
    </citation>
    <scope>NUCLEOTIDE SEQUENCE [MRNA]</scope>
    <source>
        <strain>129/J</strain>
    </source>
</reference>
<reference key="2">
    <citation type="journal article" date="2004" name="Genome Res.">
        <title>The status, quality, and expansion of the NIH full-length cDNA project: the Mammalian Gene Collection (MGC).</title>
        <authorList>
            <consortium name="The MGC Project Team"/>
        </authorList>
    </citation>
    <scope>NUCLEOTIDE SEQUENCE [LARGE SCALE MRNA]</scope>
    <source>
        <tissue>Brain</tissue>
    </source>
</reference>
<dbReference type="EMBL" id="AF288601">
    <property type="protein sequence ID" value="AAQ14349.1"/>
    <property type="molecule type" value="mRNA"/>
</dbReference>
<dbReference type="EMBL" id="BC139350">
    <property type="protein sequence ID" value="AAI39351.1"/>
    <property type="molecule type" value="mRNA"/>
</dbReference>
<dbReference type="EMBL" id="BC139352">
    <property type="protein sequence ID" value="AAI39353.1"/>
    <property type="molecule type" value="mRNA"/>
</dbReference>
<dbReference type="CCDS" id="CCDS22345.1"/>
<dbReference type="RefSeq" id="NP_001357900.1">
    <property type="nucleotide sequence ID" value="NM_001370971.1"/>
</dbReference>
<dbReference type="RefSeq" id="NP_955396.2">
    <property type="nucleotide sequence ID" value="NM_199364.3"/>
</dbReference>
<dbReference type="RefSeq" id="XP_006509669.1">
    <property type="nucleotide sequence ID" value="XM_006509606.1"/>
</dbReference>
<dbReference type="RefSeq" id="XP_006509670.1">
    <property type="nucleotide sequence ID" value="XM_006509607.3"/>
</dbReference>
<dbReference type="RefSeq" id="XP_006509671.1">
    <property type="nucleotide sequence ID" value="XM_006509608.5"/>
</dbReference>
<dbReference type="RefSeq" id="XP_030099244.1">
    <property type="nucleotide sequence ID" value="XM_030243384.2"/>
</dbReference>
<dbReference type="RefSeq" id="XP_030099245.1">
    <property type="nucleotide sequence ID" value="XM_030243385.2"/>
</dbReference>
<dbReference type="SMR" id="P60853"/>
<dbReference type="BioGRID" id="229205">
    <property type="interactions" value="2"/>
</dbReference>
<dbReference type="FunCoup" id="P60853">
    <property type="interactions" value="229"/>
</dbReference>
<dbReference type="IntAct" id="P60853">
    <property type="interactions" value="2"/>
</dbReference>
<dbReference type="MINT" id="P60853"/>
<dbReference type="STRING" id="10090.ENSMUSP00000139117"/>
<dbReference type="GlyGen" id="P60853">
    <property type="glycosylation" value="1 site"/>
</dbReference>
<dbReference type="iPTMnet" id="P60853"/>
<dbReference type="PhosphoSitePlus" id="P60853"/>
<dbReference type="PaxDb" id="10090-ENSMUSP00000139117"/>
<dbReference type="ProteomicsDB" id="292062"/>
<dbReference type="Antibodypedia" id="1747">
    <property type="antibodies" value="242 antibodies from 27 providers"/>
</dbReference>
<dbReference type="DNASU" id="211134"/>
<dbReference type="Ensembl" id="ENSMUST00000037049.4">
    <property type="protein sequence ID" value="ENSMUSP00000039397.4"/>
    <property type="gene ID" value="ENSMUSG00000036306.14"/>
</dbReference>
<dbReference type="Ensembl" id="ENSMUST00000185176.8">
    <property type="protein sequence ID" value="ENSMUSP00000139117.2"/>
    <property type="gene ID" value="ENSMUSG00000036306.14"/>
</dbReference>
<dbReference type="GeneID" id="211134"/>
<dbReference type="KEGG" id="mmu:211134"/>
<dbReference type="UCSC" id="uc009lxa.1">
    <property type="organism name" value="mouse"/>
</dbReference>
<dbReference type="AGR" id="MGI:2684762"/>
<dbReference type="CTD" id="11178"/>
<dbReference type="MGI" id="MGI:2684762">
    <property type="gene designation" value="Lzts1"/>
</dbReference>
<dbReference type="VEuPathDB" id="HostDB:ENSMUSG00000036306"/>
<dbReference type="eggNOG" id="ENOG502QRU7">
    <property type="taxonomic scope" value="Eukaryota"/>
</dbReference>
<dbReference type="GeneTree" id="ENSGT00940000154078"/>
<dbReference type="HOGENOM" id="CLU_026379_2_1_1"/>
<dbReference type="InParanoid" id="P60853"/>
<dbReference type="OMA" id="QKTRGSH"/>
<dbReference type="OrthoDB" id="10030037at2759"/>
<dbReference type="PhylomeDB" id="P60853"/>
<dbReference type="TreeFam" id="TF331420"/>
<dbReference type="BioGRID-ORCS" id="211134">
    <property type="hits" value="5 hits in 79 CRISPR screens"/>
</dbReference>
<dbReference type="CD-CODE" id="CE726F99">
    <property type="entry name" value="Postsynaptic density"/>
</dbReference>
<dbReference type="PRO" id="PR:P60853"/>
<dbReference type="Proteomes" id="UP000000589">
    <property type="component" value="Chromosome 8"/>
</dbReference>
<dbReference type="RNAct" id="P60853">
    <property type="molecule type" value="protein"/>
</dbReference>
<dbReference type="Bgee" id="ENSMUSG00000036306">
    <property type="expression patterns" value="Expressed in olfactory tubercle and 166 other cell types or tissues"/>
</dbReference>
<dbReference type="GO" id="GO:0016324">
    <property type="term" value="C:apical plasma membrane"/>
    <property type="evidence" value="ECO:0007669"/>
    <property type="project" value="Ensembl"/>
</dbReference>
<dbReference type="GO" id="GO:0044297">
    <property type="term" value="C:cell body"/>
    <property type="evidence" value="ECO:0007669"/>
    <property type="project" value="Ensembl"/>
</dbReference>
<dbReference type="GO" id="GO:0005737">
    <property type="term" value="C:cytoplasm"/>
    <property type="evidence" value="ECO:0007669"/>
    <property type="project" value="UniProtKB-SubCell"/>
</dbReference>
<dbReference type="GO" id="GO:0043198">
    <property type="term" value="C:dendritic shaft"/>
    <property type="evidence" value="ECO:0007669"/>
    <property type="project" value="Ensembl"/>
</dbReference>
<dbReference type="GO" id="GO:0043197">
    <property type="term" value="C:dendritic spine"/>
    <property type="evidence" value="ECO:0007669"/>
    <property type="project" value="UniProtKB-SubCell"/>
</dbReference>
<dbReference type="GO" id="GO:0098978">
    <property type="term" value="C:glutamatergic synapse"/>
    <property type="evidence" value="ECO:0000314"/>
    <property type="project" value="SynGO"/>
</dbReference>
<dbReference type="GO" id="GO:0098839">
    <property type="term" value="C:postsynaptic density membrane"/>
    <property type="evidence" value="ECO:0007669"/>
    <property type="project" value="Ensembl"/>
</dbReference>
<dbReference type="GO" id="GO:0016242">
    <property type="term" value="P:negative regulation of macroautophagy"/>
    <property type="evidence" value="ECO:0007669"/>
    <property type="project" value="Ensembl"/>
</dbReference>
<dbReference type="GO" id="GO:0048814">
    <property type="term" value="P:regulation of dendrite morphogenesis"/>
    <property type="evidence" value="ECO:0007669"/>
    <property type="project" value="Ensembl"/>
</dbReference>
<dbReference type="GO" id="GO:0150052">
    <property type="term" value="P:regulation of postsynapse assembly"/>
    <property type="evidence" value="ECO:0000314"/>
    <property type="project" value="SynGO"/>
</dbReference>
<dbReference type="GO" id="GO:0048167">
    <property type="term" value="P:regulation of synaptic plasticity"/>
    <property type="evidence" value="ECO:0007669"/>
    <property type="project" value="Ensembl"/>
</dbReference>
<dbReference type="InterPro" id="IPR045329">
    <property type="entry name" value="LZTS"/>
</dbReference>
<dbReference type="PANTHER" id="PTHR19354:SF5">
    <property type="entry name" value="ZIPPER PUTATIVE TUMOR SUPPRESSOR 1-RELATED"/>
    <property type="match status" value="1"/>
</dbReference>
<dbReference type="PANTHER" id="PTHR19354">
    <property type="entry name" value="ZIPPER PUTATIVE TUMOR SUPPRESSOR 2 HOMOLOG-LIKE PROTEIN-RELATED"/>
    <property type="match status" value="1"/>
</dbReference>
<dbReference type="Pfam" id="PF06818">
    <property type="entry name" value="Fez1"/>
    <property type="match status" value="1"/>
</dbReference>
<evidence type="ECO:0000250" key="1"/>
<evidence type="ECO:0000255" key="2"/>
<evidence type="ECO:0000256" key="3">
    <source>
        <dbReference type="SAM" id="MobiDB-lite"/>
    </source>
</evidence>
<evidence type="ECO:0000305" key="4"/>
<feature type="initiator methionine" description="Removed">
    <location>
        <position position="1"/>
    </location>
</feature>
<feature type="chain" id="PRO_0000182972" description="Leucine zipper putative tumor suppressor 1">
    <location>
        <begin position="2"/>
        <end position="599"/>
    </location>
</feature>
<feature type="region of interest" description="Disordered" evidence="3">
    <location>
        <begin position="135"/>
        <end position="190"/>
    </location>
</feature>
<feature type="region of interest" description="Disordered" evidence="3">
    <location>
        <begin position="288"/>
        <end position="324"/>
    </location>
</feature>
<feature type="coiled-coil region" evidence="2">
    <location>
        <begin position="256"/>
        <end position="572"/>
    </location>
</feature>
<feature type="compositionally biased region" description="Basic and acidic residues" evidence="3">
    <location>
        <begin position="153"/>
        <end position="162"/>
    </location>
</feature>
<feature type="compositionally biased region" description="Polar residues" evidence="3">
    <location>
        <begin position="174"/>
        <end position="190"/>
    </location>
</feature>
<feature type="compositionally biased region" description="Basic and acidic residues" evidence="3">
    <location>
        <begin position="288"/>
        <end position="313"/>
    </location>
</feature>
<feature type="lipid moiety-binding region" description="N-myristoyl glycine" evidence="1">
    <location>
        <position position="2"/>
    </location>
</feature>
<feature type="sequence conflict" description="In Ref. 1; AAQ14349." evidence="4" ref="1">
    <original>I</original>
    <variation>M</variation>
    <location>
        <position position="90"/>
    </location>
</feature>
<proteinExistence type="evidence at transcript level"/>
<sequence length="599" mass="67290">MGSVSSLISGHSFHSKHCRASQYKLRKSSHLKKLNRYSDGLLRFGFSQDSGRGKSSSKMGKSEDFFYIKVSQKARGSHRPDYTALSSGDIGGQTGVDFDPATPPKLMPFSNQLEMSSDKGAVRPTAFKPVLPRSGAILHSSPESTSHQLHPMPPDKPKEQELKPGLCSGALSDSGRNSMSSLPTHSTTSSYQLDPLVTPVGPTSRFGGSAHNITQGIILQDSNMMSLKALSFSDGGSKLAHPGKADKGASCVRSPLSTDECTIQELEQKLLQRETALQKLQRSFDEKEFASGQTFEERPRRTRDELECLEPKSKLKPPSQKSQRTQQVLQLQVLQLQQEKRQLRQELESLMKEQDLLETKLRSYEREKTNFAPALEETQWEVCQKSGEISLLKQQLKESQLEVNTKASEILSLKAQLKDTRGKLDGMELKTQDLESALRTKGLELEVCENELQRKKNEAELLREKVNLLEQELMELRAQAALHPAPLGPPGVGLTFSEDIPALQRELDRLRAELKEERQGHDQMSSGFQHERLVWKEEKEKVIQYQRQLQQSYLAMYQRNQRLEKALQQLARGDGPGEPFEIDLEGADIPYEDIIATEI</sequence>
<name>LZTS1_MOUSE</name>